<sequence length="161" mass="17853">MSIITKMILNADAEVRYLTPGELDQINIFVKSSQRRLQLVEALTQSRATIVKQAGKDIFQRFPRLVAPGGNAYGENMTATCLRDMDYYLRLITYSVAAGDTTPIQEIGIVGVRQMYRSLGTPIDAVAESVRAMKNITTSMLSGEDASEVGTYFDYLITNLQ</sequence>
<reference key="1">
    <citation type="journal article" date="1988" name="J. Bacteriol.">
        <title>Genes encoding core components of the phycobilisome in the cyanobacterium Calothrix sp. strain PCC 7601: occurrence of a multigene family.</title>
        <authorList>
            <person name="Houmard J."/>
            <person name="Capuano V."/>
            <person name="Coursin T."/>
            <person name="Tandeau de Marsac N."/>
        </authorList>
    </citation>
    <scope>NUCLEOTIDE SEQUENCE [GENOMIC DNA]</scope>
</reference>
<proteinExistence type="inferred from homology"/>
<protein>
    <recommendedName>
        <fullName>Allophycocyanin alpha chain 2</fullName>
    </recommendedName>
</protein>
<keyword id="KW-0042">Antenna complex</keyword>
<keyword id="KW-0089">Bile pigment</keyword>
<keyword id="KW-0157">Chromophore</keyword>
<keyword id="KW-0249">Electron transport</keyword>
<keyword id="KW-0472">Membrane</keyword>
<keyword id="KW-0488">Methylation</keyword>
<keyword id="KW-0602">Photosynthesis</keyword>
<keyword id="KW-0605">Phycobilisome</keyword>
<keyword id="KW-0793">Thylakoid</keyword>
<keyword id="KW-0813">Transport</keyword>
<gene>
    <name type="primary">apcA2</name>
</gene>
<comment type="function">
    <text>Light-harvesting photosynthetic bile pigment-protein from the phycobiliprotein complex. Allophycocyanin has a maximum absorption at approximately 650 nanometers.</text>
</comment>
<comment type="subunit">
    <text evidence="1">Component of the phycobilisome. Heterodimer of an alpha and a beta chain (By similarity).</text>
</comment>
<comment type="subcellular location">
    <subcellularLocation>
        <location evidence="1">Cellular thylakoid membrane</location>
        <topology evidence="1">Peripheral membrane protein</topology>
        <orientation evidence="1">Cytoplasmic side</orientation>
    </subcellularLocation>
    <text evidence="1">Forms the core of the phycobilisome.</text>
</comment>
<comment type="PTM">
    <text evidence="1">Contains one covalently linked bilin chromophore.</text>
</comment>
<comment type="similarity">
    <text evidence="2">Belongs to the phycobiliprotein family.</text>
</comment>
<accession>P16572</accession>
<organism>
    <name type="scientific">Microchaete diplosiphon</name>
    <name type="common">Fremyella diplosiphon</name>
    <dbReference type="NCBI Taxonomy" id="1197"/>
    <lineage>
        <taxon>Bacteria</taxon>
        <taxon>Bacillati</taxon>
        <taxon>Cyanobacteriota</taxon>
        <taxon>Cyanophyceae</taxon>
        <taxon>Nostocales</taxon>
        <taxon>Rivulariaceae</taxon>
        <taxon>Microchaete</taxon>
    </lineage>
</organism>
<evidence type="ECO:0000250" key="1"/>
<evidence type="ECO:0000305" key="2"/>
<dbReference type="EMBL" id="M20807">
    <property type="protein sequence ID" value="AAA24877.1"/>
    <property type="molecule type" value="Genomic_DNA"/>
</dbReference>
<dbReference type="SMR" id="P16572"/>
<dbReference type="GO" id="GO:0030089">
    <property type="term" value="C:phycobilisome"/>
    <property type="evidence" value="ECO:0007669"/>
    <property type="project" value="UniProtKB-KW"/>
</dbReference>
<dbReference type="GO" id="GO:0031676">
    <property type="term" value="C:plasma membrane-derived thylakoid membrane"/>
    <property type="evidence" value="ECO:0007669"/>
    <property type="project" value="UniProtKB-SubCell"/>
</dbReference>
<dbReference type="GO" id="GO:0015979">
    <property type="term" value="P:photosynthesis"/>
    <property type="evidence" value="ECO:0007669"/>
    <property type="project" value="UniProtKB-KW"/>
</dbReference>
<dbReference type="Gene3D" id="1.10.490.20">
    <property type="entry name" value="Phycocyanins"/>
    <property type="match status" value="1"/>
</dbReference>
<dbReference type="InterPro" id="IPR009050">
    <property type="entry name" value="Globin-like_sf"/>
</dbReference>
<dbReference type="InterPro" id="IPR012128">
    <property type="entry name" value="Phycobilisome_asu/bsu"/>
</dbReference>
<dbReference type="InterPro" id="IPR038719">
    <property type="entry name" value="Phycobilisome_asu/bsu_sf"/>
</dbReference>
<dbReference type="PANTHER" id="PTHR34011:SF2">
    <property type="entry name" value="ALLOPHYCOCYANIN ALPHA CHAIN"/>
    <property type="match status" value="1"/>
</dbReference>
<dbReference type="PANTHER" id="PTHR34011">
    <property type="entry name" value="PHYCOBILISOME 32.1 KDA LINKER POLYPEPTIDE, PHYCOCYANIN-ASSOCIATED, ROD 2-RELATED"/>
    <property type="match status" value="1"/>
</dbReference>
<dbReference type="Pfam" id="PF00502">
    <property type="entry name" value="Phycobilisome"/>
    <property type="match status" value="1"/>
</dbReference>
<dbReference type="PIRSF" id="PIRSF000081">
    <property type="entry name" value="Phycocyanin"/>
    <property type="match status" value="1"/>
</dbReference>
<dbReference type="SUPFAM" id="SSF46458">
    <property type="entry name" value="Globin-like"/>
    <property type="match status" value="1"/>
</dbReference>
<name>PHAA2_MICDP</name>
<feature type="initiator methionine" description="Removed" evidence="1">
    <location>
        <position position="1"/>
    </location>
</feature>
<feature type="chain" id="PRO_0000199072" description="Allophycocyanin alpha chain 2">
    <location>
        <begin position="2"/>
        <end position="161"/>
    </location>
</feature>
<feature type="binding site" description="covalent" evidence="1">
    <location>
        <position position="81"/>
    </location>
    <ligand>
        <name>(2R,3E)-phycocyanobilin</name>
        <dbReference type="ChEBI" id="CHEBI:85275"/>
    </ligand>
</feature>
<feature type="modified residue" description="N4-methylasparagine" evidence="1">
    <location>
        <position position="71"/>
    </location>
</feature>